<dbReference type="EMBL" id="AL162973">
    <property type="protein sequence ID" value="CAB86040.1"/>
    <property type="molecule type" value="Genomic_DNA"/>
</dbReference>
<dbReference type="EMBL" id="CP002688">
    <property type="protein sequence ID" value="AED90528.1"/>
    <property type="molecule type" value="Genomic_DNA"/>
</dbReference>
<dbReference type="EMBL" id="CP002688">
    <property type="protein sequence ID" value="ANM70645.1"/>
    <property type="molecule type" value="Genomic_DNA"/>
</dbReference>
<dbReference type="EMBL" id="CP002688">
    <property type="protein sequence ID" value="ANM70646.1"/>
    <property type="molecule type" value="Genomic_DNA"/>
</dbReference>
<dbReference type="EMBL" id="CP002688">
    <property type="protein sequence ID" value="ANM70647.1"/>
    <property type="molecule type" value="Genomic_DNA"/>
</dbReference>
<dbReference type="EMBL" id="CP002688">
    <property type="protein sequence ID" value="ANM70648.1"/>
    <property type="molecule type" value="Genomic_DNA"/>
</dbReference>
<dbReference type="PIR" id="T48307">
    <property type="entry name" value="T48307"/>
</dbReference>
<dbReference type="RefSeq" id="NP_001332236.1">
    <property type="nucleotide sequence ID" value="NM_001342676.1"/>
</dbReference>
<dbReference type="RefSeq" id="NP_001332237.1">
    <property type="nucleotide sequence ID" value="NM_001342677.1"/>
</dbReference>
<dbReference type="RefSeq" id="NP_001332238.1">
    <property type="nucleotide sequence ID" value="NM_001342674.1"/>
</dbReference>
<dbReference type="RefSeq" id="NP_001332239.1">
    <property type="nucleotide sequence ID" value="NM_001342675.1"/>
</dbReference>
<dbReference type="RefSeq" id="NP_195906.1">
    <property type="nucleotide sequence ID" value="NM_120364.1"/>
</dbReference>
<dbReference type="SMR" id="Q9LYZ9"/>
<dbReference type="FunCoup" id="Q9LYZ9">
    <property type="interactions" value="434"/>
</dbReference>
<dbReference type="STRING" id="3702.Q9LYZ9"/>
<dbReference type="iPTMnet" id="Q9LYZ9"/>
<dbReference type="PaxDb" id="3702-AT5G02860.1"/>
<dbReference type="ProteomicsDB" id="249000"/>
<dbReference type="EnsemblPlants" id="AT5G02860.1">
    <property type="protein sequence ID" value="AT5G02860.1"/>
    <property type="gene ID" value="AT5G02860"/>
</dbReference>
<dbReference type="EnsemblPlants" id="AT5G02860.2">
    <property type="protein sequence ID" value="AT5G02860.2"/>
    <property type="gene ID" value="AT5G02860"/>
</dbReference>
<dbReference type="EnsemblPlants" id="AT5G02860.3">
    <property type="protein sequence ID" value="AT5G02860.3"/>
    <property type="gene ID" value="AT5G02860"/>
</dbReference>
<dbReference type="EnsemblPlants" id="AT5G02860.4">
    <property type="protein sequence ID" value="AT5G02860.4"/>
    <property type="gene ID" value="AT5G02860"/>
</dbReference>
<dbReference type="EnsemblPlants" id="AT5G02860.5">
    <property type="protein sequence ID" value="AT5G02860.5"/>
    <property type="gene ID" value="AT5G02860"/>
</dbReference>
<dbReference type="GeneID" id="831761"/>
<dbReference type="Gramene" id="AT5G02860.1">
    <property type="protein sequence ID" value="AT5G02860.1"/>
    <property type="gene ID" value="AT5G02860"/>
</dbReference>
<dbReference type="Gramene" id="AT5G02860.2">
    <property type="protein sequence ID" value="AT5G02860.2"/>
    <property type="gene ID" value="AT5G02860"/>
</dbReference>
<dbReference type="Gramene" id="AT5G02860.3">
    <property type="protein sequence ID" value="AT5G02860.3"/>
    <property type="gene ID" value="AT5G02860"/>
</dbReference>
<dbReference type="Gramene" id="AT5G02860.4">
    <property type="protein sequence ID" value="AT5G02860.4"/>
    <property type="gene ID" value="AT5G02860"/>
</dbReference>
<dbReference type="Gramene" id="AT5G02860.5">
    <property type="protein sequence ID" value="AT5G02860.5"/>
    <property type="gene ID" value="AT5G02860"/>
</dbReference>
<dbReference type="KEGG" id="ath:AT5G02860"/>
<dbReference type="Araport" id="AT5G02860"/>
<dbReference type="TAIR" id="AT5G02860"/>
<dbReference type="eggNOG" id="KOG4197">
    <property type="taxonomic scope" value="Eukaryota"/>
</dbReference>
<dbReference type="HOGENOM" id="CLU_002706_49_8_1"/>
<dbReference type="InParanoid" id="Q9LYZ9"/>
<dbReference type="OMA" id="MMEAGIY"/>
<dbReference type="PhylomeDB" id="Q9LYZ9"/>
<dbReference type="PRO" id="PR:Q9LYZ9"/>
<dbReference type="Proteomes" id="UP000006548">
    <property type="component" value="Chromosome 5"/>
</dbReference>
<dbReference type="ExpressionAtlas" id="Q9LYZ9">
    <property type="expression patterns" value="baseline and differential"/>
</dbReference>
<dbReference type="FunFam" id="1.25.40.10:FF:000530">
    <property type="entry name" value="Pentatricopeptide repeat-containing protein At1g74850, chloroplastic"/>
    <property type="match status" value="1"/>
</dbReference>
<dbReference type="Gene3D" id="1.25.40.10">
    <property type="entry name" value="Tetratricopeptide repeat domain"/>
    <property type="match status" value="7"/>
</dbReference>
<dbReference type="InterPro" id="IPR002885">
    <property type="entry name" value="Pentatricopeptide_rpt"/>
</dbReference>
<dbReference type="InterPro" id="IPR011990">
    <property type="entry name" value="TPR-like_helical_dom_sf"/>
</dbReference>
<dbReference type="NCBIfam" id="TIGR00756">
    <property type="entry name" value="PPR"/>
    <property type="match status" value="14"/>
</dbReference>
<dbReference type="PANTHER" id="PTHR47938:SF35">
    <property type="entry name" value="PENTATRICOPEPTIDE REPEAT-CONTAINING PROTEIN 4, MITOCHONDRIAL-RELATED"/>
    <property type="match status" value="1"/>
</dbReference>
<dbReference type="PANTHER" id="PTHR47938">
    <property type="entry name" value="RESPIRATORY COMPLEX I CHAPERONE (CIA84), PUTATIVE (AFU_ORTHOLOGUE AFUA_2G06020)-RELATED"/>
    <property type="match status" value="1"/>
</dbReference>
<dbReference type="Pfam" id="PF01535">
    <property type="entry name" value="PPR"/>
    <property type="match status" value="2"/>
</dbReference>
<dbReference type="Pfam" id="PF12854">
    <property type="entry name" value="PPR_1"/>
    <property type="match status" value="1"/>
</dbReference>
<dbReference type="Pfam" id="PF13041">
    <property type="entry name" value="PPR_2"/>
    <property type="match status" value="3"/>
</dbReference>
<dbReference type="Pfam" id="PF13812">
    <property type="entry name" value="PPR_3"/>
    <property type="match status" value="3"/>
</dbReference>
<dbReference type="SUPFAM" id="SSF81901">
    <property type="entry name" value="HCP-like"/>
    <property type="match status" value="1"/>
</dbReference>
<dbReference type="PROSITE" id="PS51375">
    <property type="entry name" value="PPR"/>
    <property type="match status" value="18"/>
</dbReference>
<gene>
    <name type="ordered locus">At5g02860</name>
    <name type="ORF">F9G14_170</name>
</gene>
<keyword id="KW-1185">Reference proteome</keyword>
<keyword id="KW-0677">Repeat</keyword>
<organism>
    <name type="scientific">Arabidopsis thaliana</name>
    <name type="common">Mouse-ear cress</name>
    <dbReference type="NCBI Taxonomy" id="3702"/>
    <lineage>
        <taxon>Eukaryota</taxon>
        <taxon>Viridiplantae</taxon>
        <taxon>Streptophyta</taxon>
        <taxon>Embryophyta</taxon>
        <taxon>Tracheophyta</taxon>
        <taxon>Spermatophyta</taxon>
        <taxon>Magnoliopsida</taxon>
        <taxon>eudicotyledons</taxon>
        <taxon>Gunneridae</taxon>
        <taxon>Pentapetalae</taxon>
        <taxon>rosids</taxon>
        <taxon>malvids</taxon>
        <taxon>Brassicales</taxon>
        <taxon>Brassicaceae</taxon>
        <taxon>Camelineae</taxon>
        <taxon>Arabidopsis</taxon>
    </lineage>
</organism>
<comment type="similarity">
    <text evidence="2">Belongs to the PPR family. P subfamily.</text>
</comment>
<comment type="online information" name="Pentatricopeptide repeat proteins">
    <link uri="https://ppr.plantenergy.uwa.edu.au"/>
</comment>
<name>PP362_ARATH</name>
<protein>
    <recommendedName>
        <fullName>Pentatricopeptide repeat-containing protein At5g02860</fullName>
    </recommendedName>
</protein>
<feature type="chain" id="PRO_0000363499" description="Pentatricopeptide repeat-containing protein At5g02860">
    <location>
        <begin position="1"/>
        <end position="819"/>
    </location>
</feature>
<feature type="repeat" description="PPR 1">
    <location>
        <begin position="172"/>
        <end position="206"/>
    </location>
</feature>
<feature type="repeat" description="PPR 2">
    <location>
        <begin position="207"/>
        <end position="241"/>
    </location>
</feature>
<feature type="repeat" description="PPR 3">
    <location>
        <begin position="242"/>
        <end position="277"/>
    </location>
</feature>
<feature type="repeat" description="PPR 4">
    <location>
        <begin position="278"/>
        <end position="312"/>
    </location>
</feature>
<feature type="repeat" description="PPR 5">
    <location>
        <begin position="313"/>
        <end position="347"/>
    </location>
</feature>
<feature type="repeat" description="PPR 6">
    <location>
        <begin position="348"/>
        <end position="382"/>
    </location>
</feature>
<feature type="repeat" description="PPR 7">
    <location>
        <begin position="383"/>
        <end position="417"/>
    </location>
</feature>
<feature type="repeat" description="PPR 8">
    <location>
        <begin position="418"/>
        <end position="452"/>
    </location>
</feature>
<feature type="repeat" description="PPR 9">
    <location>
        <begin position="453"/>
        <end position="487"/>
    </location>
</feature>
<feature type="repeat" description="PPR 10">
    <location>
        <begin position="488"/>
        <end position="522"/>
    </location>
</feature>
<feature type="repeat" description="PPR 11">
    <location>
        <begin position="523"/>
        <end position="557"/>
    </location>
</feature>
<feature type="repeat" description="PPR 12">
    <location>
        <begin position="558"/>
        <end position="592"/>
    </location>
</feature>
<feature type="repeat" description="PPR 13">
    <location>
        <begin position="593"/>
        <end position="627"/>
    </location>
</feature>
<feature type="repeat" description="PPR 14">
    <location>
        <begin position="628"/>
        <end position="662"/>
    </location>
</feature>
<feature type="repeat" description="PPR 15">
    <location>
        <begin position="663"/>
        <end position="697"/>
    </location>
</feature>
<feature type="repeat" description="PPR 16">
    <location>
        <begin position="698"/>
        <end position="732"/>
    </location>
</feature>
<feature type="repeat" description="PPR 17">
    <location>
        <begin position="733"/>
        <end position="767"/>
    </location>
</feature>
<feature type="repeat" description="PPR 18">
    <location>
        <begin position="768"/>
        <end position="802"/>
    </location>
</feature>
<feature type="region of interest" description="Disordered" evidence="1">
    <location>
        <begin position="57"/>
        <end position="93"/>
    </location>
</feature>
<proteinExistence type="evidence at transcript level"/>
<accession>Q9LYZ9</accession>
<evidence type="ECO:0000256" key="1">
    <source>
        <dbReference type="SAM" id="MobiDB-lite"/>
    </source>
</evidence>
<evidence type="ECO:0000305" key="2"/>
<reference key="1">
    <citation type="journal article" date="2000" name="Nature">
        <title>Sequence and analysis of chromosome 5 of the plant Arabidopsis thaliana.</title>
        <authorList>
            <person name="Tabata S."/>
            <person name="Kaneko T."/>
            <person name="Nakamura Y."/>
            <person name="Kotani H."/>
            <person name="Kato T."/>
            <person name="Asamizu E."/>
            <person name="Miyajima N."/>
            <person name="Sasamoto S."/>
            <person name="Kimura T."/>
            <person name="Hosouchi T."/>
            <person name="Kawashima K."/>
            <person name="Kohara M."/>
            <person name="Matsumoto M."/>
            <person name="Matsuno A."/>
            <person name="Muraki A."/>
            <person name="Nakayama S."/>
            <person name="Nakazaki N."/>
            <person name="Naruo K."/>
            <person name="Okumura S."/>
            <person name="Shinpo S."/>
            <person name="Takeuchi C."/>
            <person name="Wada T."/>
            <person name="Watanabe A."/>
            <person name="Yamada M."/>
            <person name="Yasuda M."/>
            <person name="Sato S."/>
            <person name="de la Bastide M."/>
            <person name="Huang E."/>
            <person name="Spiegel L."/>
            <person name="Gnoj L."/>
            <person name="O'Shaughnessy A."/>
            <person name="Preston R."/>
            <person name="Habermann K."/>
            <person name="Murray J."/>
            <person name="Johnson D."/>
            <person name="Rohlfing T."/>
            <person name="Nelson J."/>
            <person name="Stoneking T."/>
            <person name="Pepin K."/>
            <person name="Spieth J."/>
            <person name="Sekhon M."/>
            <person name="Armstrong J."/>
            <person name="Becker M."/>
            <person name="Belter E."/>
            <person name="Cordum H."/>
            <person name="Cordes M."/>
            <person name="Courtney L."/>
            <person name="Courtney W."/>
            <person name="Dante M."/>
            <person name="Du H."/>
            <person name="Edwards J."/>
            <person name="Fryman J."/>
            <person name="Haakensen B."/>
            <person name="Lamar E."/>
            <person name="Latreille P."/>
            <person name="Leonard S."/>
            <person name="Meyer R."/>
            <person name="Mulvaney E."/>
            <person name="Ozersky P."/>
            <person name="Riley A."/>
            <person name="Strowmatt C."/>
            <person name="Wagner-McPherson C."/>
            <person name="Wollam A."/>
            <person name="Yoakum M."/>
            <person name="Bell M."/>
            <person name="Dedhia N."/>
            <person name="Parnell L."/>
            <person name="Shah R."/>
            <person name="Rodriguez M."/>
            <person name="Hoon See L."/>
            <person name="Vil D."/>
            <person name="Baker J."/>
            <person name="Kirchoff K."/>
            <person name="Toth K."/>
            <person name="King L."/>
            <person name="Bahret A."/>
            <person name="Miller B."/>
            <person name="Marra M.A."/>
            <person name="Martienssen R."/>
            <person name="McCombie W.R."/>
            <person name="Wilson R.K."/>
            <person name="Murphy G."/>
            <person name="Bancroft I."/>
            <person name="Volckaert G."/>
            <person name="Wambutt R."/>
            <person name="Duesterhoeft A."/>
            <person name="Stiekema W."/>
            <person name="Pohl T."/>
            <person name="Entian K.-D."/>
            <person name="Terryn N."/>
            <person name="Hartley N."/>
            <person name="Bent E."/>
            <person name="Johnson S."/>
            <person name="Langham S.-A."/>
            <person name="McCullagh B."/>
            <person name="Robben J."/>
            <person name="Grymonprez B."/>
            <person name="Zimmermann W."/>
            <person name="Ramsperger U."/>
            <person name="Wedler H."/>
            <person name="Balke K."/>
            <person name="Wedler E."/>
            <person name="Peters S."/>
            <person name="van Staveren M."/>
            <person name="Dirkse W."/>
            <person name="Mooijman P."/>
            <person name="Klein Lankhorst R."/>
            <person name="Weitzenegger T."/>
            <person name="Bothe G."/>
            <person name="Rose M."/>
            <person name="Hauf J."/>
            <person name="Berneiser S."/>
            <person name="Hempel S."/>
            <person name="Feldpausch M."/>
            <person name="Lamberth S."/>
            <person name="Villarroel R."/>
            <person name="Gielen J."/>
            <person name="Ardiles W."/>
            <person name="Bents O."/>
            <person name="Lemcke K."/>
            <person name="Kolesov G."/>
            <person name="Mayer K.F.X."/>
            <person name="Rudd S."/>
            <person name="Schoof H."/>
            <person name="Schueller C."/>
            <person name="Zaccaria P."/>
            <person name="Mewes H.-W."/>
            <person name="Bevan M."/>
            <person name="Fransz P.F."/>
        </authorList>
    </citation>
    <scope>NUCLEOTIDE SEQUENCE [LARGE SCALE GENOMIC DNA]</scope>
    <source>
        <strain>cv. Columbia</strain>
    </source>
</reference>
<reference key="2">
    <citation type="journal article" date="2017" name="Plant J.">
        <title>Araport11: a complete reannotation of the Arabidopsis thaliana reference genome.</title>
        <authorList>
            <person name="Cheng C.Y."/>
            <person name="Krishnakumar V."/>
            <person name="Chan A.P."/>
            <person name="Thibaud-Nissen F."/>
            <person name="Schobel S."/>
            <person name="Town C.D."/>
        </authorList>
    </citation>
    <scope>GENOME REANNOTATION</scope>
    <source>
        <strain>cv. Columbia</strain>
    </source>
</reference>
<reference key="3">
    <citation type="journal article" date="2004" name="Plant Cell">
        <title>Genome-wide analysis of Arabidopsis pentatricopeptide repeat proteins reveals their essential role in organelle biogenesis.</title>
        <authorList>
            <person name="Lurin C."/>
            <person name="Andres C."/>
            <person name="Aubourg S."/>
            <person name="Bellaoui M."/>
            <person name="Bitton F."/>
            <person name="Bruyere C."/>
            <person name="Caboche M."/>
            <person name="Debast C."/>
            <person name="Gualberto J."/>
            <person name="Hoffmann B."/>
            <person name="Lecharny A."/>
            <person name="Le Ret M."/>
            <person name="Martin-Magniette M.-L."/>
            <person name="Mireau H."/>
            <person name="Peeters N."/>
            <person name="Renou J.-P."/>
            <person name="Szurek B."/>
            <person name="Taconnat L."/>
            <person name="Small I."/>
        </authorList>
    </citation>
    <scope>GENE FAMILY</scope>
</reference>
<sequence>MADKLALPLLLPCTPSSKPYSHDQNHHISRTPFLTTSLSSPPPPPVEPLLHDVFLHQNPNSRQPISSQTSRNRNRTRIGKSRDPNLGKPWSYHGLSPQGQQVLRSLIEPNFDSGQLDSVLSELFEPFKDKPESTSSELLAFLKGLGFHKKFDLALRAFDWFMKQKDYQSMLDNSVVAIIISMLGKEGRVSSAANMFNGLQEDGFSLDVYSYTSLISAFANSGRYREAVNVFKKMEEDGCKPTLITYNVILNVFGKMGTPWNKITSLVEKMKSDGIAPDAYTYNTLITCCKRGSLHQEAAQVFEEMKAAGFSYDKVTYNALLDVYGKSHRPKEAMKVLNEMVLNGFSPSIVTYNSLISAYARDGMLDEAMELKNQMAEKGTKPDVFTYTTLLSGFERAGKVESAMSIFEEMRNAGCKPNICTFNAFIKMYGNRGKFTEMMKIFDEINVCGLSPDIVTWNTLLAVFGQNGMDSEVSGVFKEMKRAGFVPERETFNTLISAYSRCGSFEQAMTVYRRMLDAGVTPDLSTYNTVLAALARGGMWEQSEKVLAEMEDGRCKPNELTYCSLLHAYANGKEIGLMHSLAEEVYSGVIEPRAVLLKTLVLVCSKCDLLPEAERAFSELKERGFSPDITTLNSMVSIYGRRQMVAKANGVLDYMKERGFTPSMATYNSLMYMHSRSADFGKSEEILREILAKGIKPDIISYNTVIYAYCRNTRMRDASRIFSEMRNSGIVPDVITYNTFIGSYAADSMFEEAIGVVRYMIKHGCRPNQNTYNSIVDGYCKLNRKDEAKLFVEDLRNLDPHAPKGEDLRLLERIVKKWP</sequence>